<sequence length="220" mass="23832">MEGVLNFLTNINVIFTLLGYLIGGIPFGYALMKIFYGMDITKIGSGGIGATNVLRALQSKGVSNAKQMALLVLILDLFKGMFAVFLSKLFGLDYSLQWMVAIASILGHCYSPFLNFNGGKGVSTIMGSVVLLIPIESLIGLTVWFFVGKVLKISSLASILGVGTATVLIFFVPYMHIPDSVNILKEVDTQTPMVLIFIFTLIKHAGNIFNLLAGKEKKVL</sequence>
<dbReference type="EC" id="2.3.1.275" evidence="1"/>
<dbReference type="EMBL" id="CP000241">
    <property type="protein sequence ID" value="ABF85471.1"/>
    <property type="status" value="ALT_INIT"/>
    <property type="molecule type" value="Genomic_DNA"/>
</dbReference>
<dbReference type="RefSeq" id="WP_041200191.1">
    <property type="nucleotide sequence ID" value="NC_008086.1"/>
</dbReference>
<dbReference type="SMR" id="Q1CRF2"/>
<dbReference type="KEGG" id="hpa:HPAG1_1403"/>
<dbReference type="HOGENOM" id="CLU_081254_2_0_7"/>
<dbReference type="UniPathway" id="UPA00085"/>
<dbReference type="GO" id="GO:0005886">
    <property type="term" value="C:plasma membrane"/>
    <property type="evidence" value="ECO:0007669"/>
    <property type="project" value="UniProtKB-SubCell"/>
</dbReference>
<dbReference type="GO" id="GO:0043772">
    <property type="term" value="F:acyl-phosphate glycerol-3-phosphate acyltransferase activity"/>
    <property type="evidence" value="ECO:0007669"/>
    <property type="project" value="UniProtKB-UniRule"/>
</dbReference>
<dbReference type="GO" id="GO:0008654">
    <property type="term" value="P:phospholipid biosynthetic process"/>
    <property type="evidence" value="ECO:0007669"/>
    <property type="project" value="UniProtKB-UniRule"/>
</dbReference>
<dbReference type="HAMAP" id="MF_01043">
    <property type="entry name" value="PlsY"/>
    <property type="match status" value="1"/>
</dbReference>
<dbReference type="InterPro" id="IPR003811">
    <property type="entry name" value="G3P_acylTferase_PlsY"/>
</dbReference>
<dbReference type="NCBIfam" id="TIGR00023">
    <property type="entry name" value="glycerol-3-phosphate 1-O-acyltransferase PlsY"/>
    <property type="match status" value="1"/>
</dbReference>
<dbReference type="PANTHER" id="PTHR30309:SF0">
    <property type="entry name" value="GLYCEROL-3-PHOSPHATE ACYLTRANSFERASE-RELATED"/>
    <property type="match status" value="1"/>
</dbReference>
<dbReference type="PANTHER" id="PTHR30309">
    <property type="entry name" value="INNER MEMBRANE PROTEIN YGIH"/>
    <property type="match status" value="1"/>
</dbReference>
<dbReference type="Pfam" id="PF02660">
    <property type="entry name" value="G3P_acyltransf"/>
    <property type="match status" value="1"/>
</dbReference>
<dbReference type="SMART" id="SM01207">
    <property type="entry name" value="G3P_acyltransf"/>
    <property type="match status" value="1"/>
</dbReference>
<reference key="1">
    <citation type="journal article" date="2006" name="Proc. Natl. Acad. Sci. U.S.A.">
        <title>The complete genome sequence of a chronic atrophic gastritis Helicobacter pylori strain: evolution during disease progression.</title>
        <authorList>
            <person name="Oh J.D."/>
            <person name="Kling-Baeckhed H."/>
            <person name="Giannakis M."/>
            <person name="Xu J."/>
            <person name="Fulton R.S."/>
            <person name="Fulton L.A."/>
            <person name="Cordum H.S."/>
            <person name="Wang C."/>
            <person name="Elliott G."/>
            <person name="Edwards J."/>
            <person name="Mardis E.R."/>
            <person name="Engstrand L.G."/>
            <person name="Gordon J.I."/>
        </authorList>
    </citation>
    <scope>NUCLEOTIDE SEQUENCE [LARGE SCALE GENOMIC DNA]</scope>
    <source>
        <strain>HPAG1</strain>
    </source>
</reference>
<protein>
    <recommendedName>
        <fullName evidence="1">Glycerol-3-phosphate acyltransferase</fullName>
    </recommendedName>
    <alternativeName>
        <fullName evidence="1">Acyl-PO4 G3P acyltransferase</fullName>
    </alternativeName>
    <alternativeName>
        <fullName evidence="1">Acyl-phosphate--glycerol-3-phosphate acyltransferase</fullName>
    </alternativeName>
    <alternativeName>
        <fullName evidence="1">G3P acyltransferase</fullName>
        <shortName evidence="1">GPAT</shortName>
        <ecNumber evidence="1">2.3.1.275</ecNumber>
    </alternativeName>
    <alternativeName>
        <fullName evidence="1">Lysophosphatidic acid synthase</fullName>
        <shortName evidence="1">LPA synthase</shortName>
    </alternativeName>
</protein>
<keyword id="KW-0997">Cell inner membrane</keyword>
<keyword id="KW-1003">Cell membrane</keyword>
<keyword id="KW-0444">Lipid biosynthesis</keyword>
<keyword id="KW-0443">Lipid metabolism</keyword>
<keyword id="KW-0472">Membrane</keyword>
<keyword id="KW-0594">Phospholipid biosynthesis</keyword>
<keyword id="KW-1208">Phospholipid metabolism</keyword>
<keyword id="KW-0808">Transferase</keyword>
<keyword id="KW-0812">Transmembrane</keyword>
<keyword id="KW-1133">Transmembrane helix</keyword>
<name>PLSY_HELPH</name>
<organism>
    <name type="scientific">Helicobacter pylori (strain HPAG1)</name>
    <dbReference type="NCBI Taxonomy" id="357544"/>
    <lineage>
        <taxon>Bacteria</taxon>
        <taxon>Pseudomonadati</taxon>
        <taxon>Campylobacterota</taxon>
        <taxon>Epsilonproteobacteria</taxon>
        <taxon>Campylobacterales</taxon>
        <taxon>Helicobacteraceae</taxon>
        <taxon>Helicobacter</taxon>
    </lineage>
</organism>
<evidence type="ECO:0000255" key="1">
    <source>
        <dbReference type="HAMAP-Rule" id="MF_01043"/>
    </source>
</evidence>
<evidence type="ECO:0000305" key="2"/>
<feature type="chain" id="PRO_0000250305" description="Glycerol-3-phosphate acyltransferase">
    <location>
        <begin position="1"/>
        <end position="220"/>
    </location>
</feature>
<feature type="transmembrane region" description="Helical" evidence="1">
    <location>
        <begin position="11"/>
        <end position="31"/>
    </location>
</feature>
<feature type="transmembrane region" description="Helical" evidence="1">
    <location>
        <begin position="70"/>
        <end position="90"/>
    </location>
</feature>
<feature type="transmembrane region" description="Helical" evidence="1">
    <location>
        <begin position="96"/>
        <end position="116"/>
    </location>
</feature>
<feature type="transmembrane region" description="Helical" evidence="1">
    <location>
        <begin position="127"/>
        <end position="147"/>
    </location>
</feature>
<feature type="transmembrane region" description="Helical" evidence="1">
    <location>
        <begin position="153"/>
        <end position="173"/>
    </location>
</feature>
<feature type="transmembrane region" description="Helical" evidence="1">
    <location>
        <begin position="193"/>
        <end position="213"/>
    </location>
</feature>
<comment type="function">
    <text evidence="1">Catalyzes the transfer of an acyl group from acyl-phosphate (acyl-PO(4)) to glycerol-3-phosphate (G3P) to form lysophosphatidic acid (LPA). This enzyme utilizes acyl-phosphate as fatty acyl donor, but not acyl-CoA or acyl-ACP.</text>
</comment>
<comment type="catalytic activity">
    <reaction evidence="1">
        <text>an acyl phosphate + sn-glycerol 3-phosphate = a 1-acyl-sn-glycero-3-phosphate + phosphate</text>
        <dbReference type="Rhea" id="RHEA:34075"/>
        <dbReference type="ChEBI" id="CHEBI:43474"/>
        <dbReference type="ChEBI" id="CHEBI:57597"/>
        <dbReference type="ChEBI" id="CHEBI:57970"/>
        <dbReference type="ChEBI" id="CHEBI:59918"/>
        <dbReference type="EC" id="2.3.1.275"/>
    </reaction>
</comment>
<comment type="pathway">
    <text evidence="1">Lipid metabolism; phospholipid metabolism.</text>
</comment>
<comment type="subunit">
    <text evidence="1">Probably interacts with PlsX.</text>
</comment>
<comment type="subcellular location">
    <subcellularLocation>
        <location evidence="1">Cell inner membrane</location>
        <topology evidence="1">Multi-pass membrane protein</topology>
    </subcellularLocation>
</comment>
<comment type="similarity">
    <text evidence="1">Belongs to the PlsY family.</text>
</comment>
<comment type="sequence caution" evidence="2">
    <conflict type="erroneous initiation">
        <sequence resource="EMBL-CDS" id="ABF85471"/>
    </conflict>
</comment>
<gene>
    <name evidence="1" type="primary">plsY</name>
    <name type="ordered locus">HPAG1_1403</name>
</gene>
<proteinExistence type="inferred from homology"/>
<accession>Q1CRF2</accession>